<reference key="1">
    <citation type="journal article" date="1985" name="J. Bacteriol.">
        <title>Nucleotide sequence analysis of the cat gene of Proteus mirabilis: comparison with the type I (Tn9) cat gene.</title>
        <authorList>
            <person name="Charles I.G."/>
            <person name="Keyte J.W."/>
            <person name="Shaw W.V."/>
        </authorList>
    </citation>
    <scope>NUCLEOTIDE SEQUENCE [GENOMIC DNA]</scope>
</reference>
<reference key="2">
    <citation type="journal article" date="1995" name="Microbiology">
        <title>Cloning and characterization of the NapA acid phosphatase/phosphotransferase of Morganella morganii: identification of a new family of bacterial acid-phosphatase-encoding genes.</title>
        <authorList>
            <person name="Thaller M.C."/>
            <person name="Lombardi G."/>
            <person name="Berlutti F."/>
            <person name="Schippa S."/>
            <person name="Rossolini G.M."/>
        </authorList>
    </citation>
    <scope>IDENTIFICATION</scope>
    <scope>CONCEPTUAL TRANSLATION</scope>
</reference>
<accession>P56527</accession>
<dbReference type="EC" id="3.1.3.2" evidence="2"/>
<dbReference type="EMBL" id="M11587">
    <property type="status" value="NOT_ANNOTATED_CDS"/>
    <property type="molecule type" value="Genomic_DNA"/>
</dbReference>
<dbReference type="SMR" id="P56527"/>
<dbReference type="STRING" id="584.AOUC001_12150"/>
<dbReference type="GO" id="GO:0030288">
    <property type="term" value="C:outer membrane-bounded periplasmic space"/>
    <property type="evidence" value="ECO:0007669"/>
    <property type="project" value="InterPro"/>
</dbReference>
<dbReference type="GO" id="GO:0003993">
    <property type="term" value="F:acid phosphatase activity"/>
    <property type="evidence" value="ECO:0007669"/>
    <property type="project" value="UniProtKB-EC"/>
</dbReference>
<dbReference type="GO" id="GO:0046872">
    <property type="term" value="F:metal ion binding"/>
    <property type="evidence" value="ECO:0007669"/>
    <property type="project" value="UniProtKB-KW"/>
</dbReference>
<dbReference type="Gene3D" id="3.40.50.1000">
    <property type="entry name" value="HAD superfamily/HAD-like"/>
    <property type="match status" value="1"/>
</dbReference>
<dbReference type="InterPro" id="IPR005519">
    <property type="entry name" value="Acid_phosphat_B-like"/>
</dbReference>
<dbReference type="InterPro" id="IPR036412">
    <property type="entry name" value="HAD-like_sf"/>
</dbReference>
<dbReference type="InterPro" id="IPR010025">
    <property type="entry name" value="HAD-SF_ppase_IIIB_AphA"/>
</dbReference>
<dbReference type="InterPro" id="IPR023214">
    <property type="entry name" value="HAD_sf"/>
</dbReference>
<dbReference type="NCBIfam" id="TIGR01672">
    <property type="entry name" value="AphA"/>
    <property type="match status" value="1"/>
</dbReference>
<dbReference type="Pfam" id="PF03767">
    <property type="entry name" value="Acid_phosphat_B"/>
    <property type="match status" value="1"/>
</dbReference>
<dbReference type="SUPFAM" id="SSF56784">
    <property type="entry name" value="HAD-like"/>
    <property type="match status" value="1"/>
</dbReference>
<comment type="function">
    <text evidence="1">Dephosphorylates several organic phosphate monoesters. Also has a phosphotransferase activity catalyzing the transfer of low-energy phosphate groups from organic phosphate monoesters to free hydroxyl groups of various organic compounds (By similarity).</text>
</comment>
<comment type="catalytic activity">
    <reaction evidence="2">
        <text>a phosphate monoester + H2O = an alcohol + phosphate</text>
        <dbReference type="Rhea" id="RHEA:15017"/>
        <dbReference type="ChEBI" id="CHEBI:15377"/>
        <dbReference type="ChEBI" id="CHEBI:30879"/>
        <dbReference type="ChEBI" id="CHEBI:43474"/>
        <dbReference type="ChEBI" id="CHEBI:67140"/>
        <dbReference type="EC" id="3.1.3.2"/>
    </reaction>
</comment>
<comment type="cofactor">
    <cofactor evidence="2">
        <name>Mg(2+)</name>
        <dbReference type="ChEBI" id="CHEBI:18420"/>
    </cofactor>
    <text evidence="2">Binds 1 Mg(2+) ion per subunit.</text>
</comment>
<comment type="subunit">
    <text evidence="1">Homotetramer.</text>
</comment>
<comment type="subcellular location">
    <subcellularLocation>
        <location evidence="1">Periplasm</location>
    </subcellularLocation>
</comment>
<comment type="similarity">
    <text evidence="3">Belongs to the class B bacterial acid phosphatase family.</text>
</comment>
<comment type="sequence caution" evidence="3">
    <conflict type="frameshift">
        <sequence resource="EMBL" id="M11587"/>
    </conflict>
</comment>
<keyword id="KW-0378">Hydrolase</keyword>
<keyword id="KW-0460">Magnesium</keyword>
<keyword id="KW-0479">Metal-binding</keyword>
<keyword id="KW-0574">Periplasm</keyword>
<keyword id="KW-0732">Signal</keyword>
<sequence>MRKVTLTLSAIALALSLNGAAMAKVHMPEVVSQGVTVTELAHQQPIKWVSVAEIEKSLEGQAPMAVGFDIDDTFWFSSPGFYRVKLEYSPNDFSYLKNPEFWEKMNNEWDKFSMPKQVGIDLVQMHLKRGDTVYFITGRTQTKTETCVTKYVQEGLNIPA</sequence>
<proteinExistence type="inferred from homology"/>
<name>APHA_PROMI</name>
<gene>
    <name type="primary">aphA</name>
    <name type="synonym">napA</name>
</gene>
<feature type="signal peptide" evidence="1">
    <location>
        <begin position="1"/>
        <end position="23"/>
    </location>
</feature>
<feature type="chain" id="PRO_0000024007" description="Class B acid phosphatase">
    <location>
        <begin position="24"/>
        <end position="160" status="greater than"/>
    </location>
</feature>
<feature type="active site" description="Nucleophile" evidence="2">
    <location>
        <position position="69"/>
    </location>
</feature>
<feature type="active site" description="Proton donor" evidence="2">
    <location>
        <position position="71"/>
    </location>
</feature>
<feature type="binding site" evidence="2">
    <location>
        <position position="69"/>
    </location>
    <ligand>
        <name>Mg(2+)</name>
        <dbReference type="ChEBI" id="CHEBI:18420"/>
    </ligand>
</feature>
<feature type="binding site" evidence="2">
    <location>
        <position position="71"/>
    </location>
    <ligand>
        <name>Mg(2+)</name>
        <dbReference type="ChEBI" id="CHEBI:18420"/>
    </ligand>
</feature>
<feature type="binding site" evidence="2">
    <location>
        <begin position="137"/>
        <end position="138"/>
    </location>
    <ligand>
        <name>substrate</name>
    </ligand>
</feature>
<feature type="non-terminal residue">
    <location>
        <position position="160"/>
    </location>
</feature>
<evidence type="ECO:0000250" key="1"/>
<evidence type="ECO:0000250" key="2">
    <source>
        <dbReference type="UniProtKB" id="Q540U1"/>
    </source>
</evidence>
<evidence type="ECO:0000305" key="3"/>
<organism>
    <name type="scientific">Proteus mirabilis</name>
    <dbReference type="NCBI Taxonomy" id="584"/>
    <lineage>
        <taxon>Bacteria</taxon>
        <taxon>Pseudomonadati</taxon>
        <taxon>Pseudomonadota</taxon>
        <taxon>Gammaproteobacteria</taxon>
        <taxon>Enterobacterales</taxon>
        <taxon>Morganellaceae</taxon>
        <taxon>Proteus</taxon>
    </lineage>
</organism>
<protein>
    <recommendedName>
        <fullName>Class B acid phosphatase</fullName>
        <shortName>CBAP</shortName>
        <ecNumber evidence="2">3.1.3.2</ecNumber>
    </recommendedName>
</protein>